<organism>
    <name type="scientific">Escherichia coli O6:K15:H31 (strain 536 / UPEC)</name>
    <dbReference type="NCBI Taxonomy" id="362663"/>
    <lineage>
        <taxon>Bacteria</taxon>
        <taxon>Pseudomonadati</taxon>
        <taxon>Pseudomonadota</taxon>
        <taxon>Gammaproteobacteria</taxon>
        <taxon>Enterobacterales</taxon>
        <taxon>Enterobacteriaceae</taxon>
        <taxon>Escherichia</taxon>
    </lineage>
</organism>
<proteinExistence type="inferred from homology"/>
<evidence type="ECO:0000255" key="1">
    <source>
        <dbReference type="HAMAP-Rule" id="MF_01818"/>
    </source>
</evidence>
<keyword id="KW-0255">Endonuclease</keyword>
<keyword id="KW-0269">Exonuclease</keyword>
<keyword id="KW-0378">Hydrolase</keyword>
<keyword id="KW-0479">Metal-binding</keyword>
<keyword id="KW-0540">Nuclease</keyword>
<keyword id="KW-0819">tRNA processing</keyword>
<keyword id="KW-0862">Zinc</keyword>
<accession>Q0TFH3</accession>
<sequence>MELIFLGTSAGVPTRTRNVTAILLNLQHPTQSGLWLFDCGEGTQHQLLHTAFNPGKLDKIFISHLHGDHLFGLPGLLCSRSMSGIVQPLTIYGPQGIREFVETALRISGSWTDYPLEIVEIGAGEIFDDGLRKVTAYPLEHPLECYGYRIEEHDKPGALNAQALKAAGVPPGPLFQELKAGKTIMLDDGRQINGADYLAAPVPGKALAIFGDTGPCDAALELAKGVDVMVHEATLDMAMEAKANSRGHSSTRQAAALAREAGVGKLIITHVSSRYDDKGCQHLLRECRSIFPATELANDFAVFNV</sequence>
<dbReference type="EC" id="3.1.-.-" evidence="1"/>
<dbReference type="EMBL" id="CP000247">
    <property type="protein sequence ID" value="ABG70306.1"/>
    <property type="molecule type" value="Genomic_DNA"/>
</dbReference>
<dbReference type="RefSeq" id="WP_000420119.1">
    <property type="nucleotide sequence ID" value="NC_008253.1"/>
</dbReference>
<dbReference type="SMR" id="Q0TFH3"/>
<dbReference type="KEGG" id="ecp:ECP_2312"/>
<dbReference type="HOGENOM" id="CLU_031317_2_0_6"/>
<dbReference type="Proteomes" id="UP000009182">
    <property type="component" value="Chromosome"/>
</dbReference>
<dbReference type="GO" id="GO:0042781">
    <property type="term" value="F:3'-tRNA processing endoribonuclease activity"/>
    <property type="evidence" value="ECO:0007669"/>
    <property type="project" value="TreeGrafter"/>
</dbReference>
<dbReference type="GO" id="GO:0004527">
    <property type="term" value="F:exonuclease activity"/>
    <property type="evidence" value="ECO:0007669"/>
    <property type="project" value="UniProtKB-UniRule"/>
</dbReference>
<dbReference type="GO" id="GO:0008270">
    <property type="term" value="F:zinc ion binding"/>
    <property type="evidence" value="ECO:0007669"/>
    <property type="project" value="UniProtKB-UniRule"/>
</dbReference>
<dbReference type="CDD" id="cd07717">
    <property type="entry name" value="RNaseZ_ZiPD-like_MBL-fold"/>
    <property type="match status" value="1"/>
</dbReference>
<dbReference type="FunFam" id="3.60.15.10:FF:000002">
    <property type="entry name" value="Ribonuclease Z"/>
    <property type="match status" value="1"/>
</dbReference>
<dbReference type="Gene3D" id="3.60.15.10">
    <property type="entry name" value="Ribonuclease Z/Hydroxyacylglutathione hydrolase-like"/>
    <property type="match status" value="1"/>
</dbReference>
<dbReference type="HAMAP" id="MF_01818">
    <property type="entry name" value="RNase_Z_BN"/>
    <property type="match status" value="1"/>
</dbReference>
<dbReference type="InterPro" id="IPR001279">
    <property type="entry name" value="Metallo-B-lactamas"/>
</dbReference>
<dbReference type="InterPro" id="IPR036866">
    <property type="entry name" value="RibonucZ/Hydroxyglut_hydro"/>
</dbReference>
<dbReference type="InterPro" id="IPR013469">
    <property type="entry name" value="Rnase_BN"/>
</dbReference>
<dbReference type="InterPro" id="IPR013471">
    <property type="entry name" value="RNase_Z/BN"/>
</dbReference>
<dbReference type="NCBIfam" id="NF000800">
    <property type="entry name" value="PRK00055.1-1"/>
    <property type="match status" value="1"/>
</dbReference>
<dbReference type="NCBIfam" id="NF000801">
    <property type="entry name" value="PRK00055.1-3"/>
    <property type="match status" value="1"/>
</dbReference>
<dbReference type="NCBIfam" id="TIGR02651">
    <property type="entry name" value="RNase_Z"/>
    <property type="match status" value="1"/>
</dbReference>
<dbReference type="NCBIfam" id="TIGR02649">
    <property type="entry name" value="true_RNase_BN"/>
    <property type="match status" value="1"/>
</dbReference>
<dbReference type="PANTHER" id="PTHR46018">
    <property type="entry name" value="ZINC PHOSPHODIESTERASE ELAC PROTEIN 1"/>
    <property type="match status" value="1"/>
</dbReference>
<dbReference type="PANTHER" id="PTHR46018:SF2">
    <property type="entry name" value="ZINC PHOSPHODIESTERASE ELAC PROTEIN 1"/>
    <property type="match status" value="1"/>
</dbReference>
<dbReference type="Pfam" id="PF12706">
    <property type="entry name" value="Lactamase_B_2"/>
    <property type="match status" value="2"/>
</dbReference>
<dbReference type="SMART" id="SM00849">
    <property type="entry name" value="Lactamase_B"/>
    <property type="match status" value="1"/>
</dbReference>
<dbReference type="SUPFAM" id="SSF56281">
    <property type="entry name" value="Metallo-hydrolase/oxidoreductase"/>
    <property type="match status" value="1"/>
</dbReference>
<reference key="1">
    <citation type="journal article" date="2006" name="Mol. Microbiol.">
        <title>Role of pathogenicity island-associated integrases in the genome plasticity of uropathogenic Escherichia coli strain 536.</title>
        <authorList>
            <person name="Hochhut B."/>
            <person name="Wilde C."/>
            <person name="Balling G."/>
            <person name="Middendorf B."/>
            <person name="Dobrindt U."/>
            <person name="Brzuszkiewicz E."/>
            <person name="Gottschalk G."/>
            <person name="Carniel E."/>
            <person name="Hacker J."/>
        </authorList>
    </citation>
    <scope>NUCLEOTIDE SEQUENCE [LARGE SCALE GENOMIC DNA]</scope>
    <source>
        <strain>536 / UPEC</strain>
    </source>
</reference>
<name>RBN_ECOL5</name>
<feature type="chain" id="PRO_1000070278" description="Ribonuclease BN">
    <location>
        <begin position="1"/>
        <end position="305"/>
    </location>
</feature>
<feature type="active site" description="Proton acceptor" evidence="1">
    <location>
        <position position="68"/>
    </location>
</feature>
<feature type="binding site" evidence="1">
    <location>
        <position position="64"/>
    </location>
    <ligand>
        <name>Zn(2+)</name>
        <dbReference type="ChEBI" id="CHEBI:29105"/>
        <label>1</label>
        <note>catalytic</note>
    </ligand>
</feature>
<feature type="binding site" evidence="1">
    <location>
        <position position="66"/>
    </location>
    <ligand>
        <name>Zn(2+)</name>
        <dbReference type="ChEBI" id="CHEBI:29105"/>
        <label>1</label>
        <note>catalytic</note>
    </ligand>
</feature>
<feature type="binding site" evidence="1">
    <location>
        <position position="68"/>
    </location>
    <ligand>
        <name>Zn(2+)</name>
        <dbReference type="ChEBI" id="CHEBI:29105"/>
        <label>2</label>
        <note>catalytic</note>
    </ligand>
</feature>
<feature type="binding site" evidence="1">
    <location>
        <position position="69"/>
    </location>
    <ligand>
        <name>Zn(2+)</name>
        <dbReference type="ChEBI" id="CHEBI:29105"/>
        <label>2</label>
        <note>catalytic</note>
    </ligand>
</feature>
<feature type="binding site" evidence="1">
    <location>
        <position position="141"/>
    </location>
    <ligand>
        <name>Zn(2+)</name>
        <dbReference type="ChEBI" id="CHEBI:29105"/>
        <label>1</label>
        <note>catalytic</note>
    </ligand>
</feature>
<feature type="binding site" evidence="1">
    <location>
        <position position="212"/>
    </location>
    <ligand>
        <name>Zn(2+)</name>
        <dbReference type="ChEBI" id="CHEBI:29105"/>
        <label>1</label>
        <note>catalytic</note>
    </ligand>
</feature>
<feature type="binding site" evidence="1">
    <location>
        <position position="212"/>
    </location>
    <ligand>
        <name>Zn(2+)</name>
        <dbReference type="ChEBI" id="CHEBI:29105"/>
        <label>2</label>
        <note>catalytic</note>
    </ligand>
</feature>
<feature type="binding site" evidence="1">
    <location>
        <position position="270"/>
    </location>
    <ligand>
        <name>Zn(2+)</name>
        <dbReference type="ChEBI" id="CHEBI:29105"/>
        <label>2</label>
        <note>catalytic</note>
    </ligand>
</feature>
<comment type="function">
    <text evidence="1">Zinc phosphodiesterase, which has both exoribonuclease and endoribonuclease activities.</text>
</comment>
<comment type="cofactor">
    <cofactor evidence="1">
        <name>Zn(2+)</name>
        <dbReference type="ChEBI" id="CHEBI:29105"/>
    </cofactor>
    <text evidence="1">Binds 2 Zn(2+) ions.</text>
</comment>
<comment type="subunit">
    <text evidence="1">Homodimer.</text>
</comment>
<comment type="similarity">
    <text evidence="1">Belongs to the RNase Z family. RNase BN subfamily.</text>
</comment>
<protein>
    <recommendedName>
        <fullName evidence="1">Ribonuclease BN</fullName>
        <shortName evidence="1">RNase BN</shortName>
        <ecNumber evidence="1">3.1.-.-</ecNumber>
    </recommendedName>
    <alternativeName>
        <fullName evidence="1">Ribonuclease Z homolog</fullName>
        <shortName evidence="1">RNase Z homolog</shortName>
    </alternativeName>
</protein>
<gene>
    <name evidence="1" type="primary">rbn</name>
    <name type="synonym">rnz</name>
    <name type="ordered locus">ECP_2312</name>
</gene>